<evidence type="ECO:0000250" key="1"/>
<evidence type="ECO:0000255" key="2">
    <source>
        <dbReference type="PROSITE-ProRule" id="PRU00169"/>
    </source>
</evidence>
<evidence type="ECO:0000255" key="3">
    <source>
        <dbReference type="PROSITE-ProRule" id="PRU01091"/>
    </source>
</evidence>
<accession>Q49XM7</accession>
<reference key="1">
    <citation type="journal article" date="2005" name="Proc. Natl. Acad. Sci. U.S.A.">
        <title>Whole genome sequence of Staphylococcus saprophyticus reveals the pathogenesis of uncomplicated urinary tract infection.</title>
        <authorList>
            <person name="Kuroda M."/>
            <person name="Yamashita A."/>
            <person name="Hirakawa H."/>
            <person name="Kumano M."/>
            <person name="Morikawa K."/>
            <person name="Higashide M."/>
            <person name="Maruyama A."/>
            <person name="Inose Y."/>
            <person name="Matoba K."/>
            <person name="Toh H."/>
            <person name="Kuhara S."/>
            <person name="Hattori M."/>
            <person name="Ohta T."/>
        </authorList>
    </citation>
    <scope>NUCLEOTIDE SEQUENCE [LARGE SCALE GENOMIC DNA]</scope>
    <source>
        <strain>ATCC 15305 / DSM 20229 / NCIMB 8711 / NCTC 7292 / S-41</strain>
    </source>
</reference>
<sequence>MTKILIVEDEQNLARFIELELEHENYDVDIEYDGKPGLEKALSNTYDLILLDLMLPNINGLEICRQIRQNQTTPIIIITAKSDTYDKVAGLDYGADDYIVKPFDIEELLARIRAMLRRQPQKNLIDIKGIIIDKDAFKVTVDGQPLDLTKTEYDLLFLLVENRNHVLQREQIITDVWGYDTEVETNVVDVYIRYLRNKLKPFGKDKCIETVRGVGYVVRQ</sequence>
<organism>
    <name type="scientific">Staphylococcus saprophyticus subsp. saprophyticus (strain ATCC 15305 / DSM 20229 / NCIMB 8711 / NCTC 7292 / S-41)</name>
    <dbReference type="NCBI Taxonomy" id="342451"/>
    <lineage>
        <taxon>Bacteria</taxon>
        <taxon>Bacillati</taxon>
        <taxon>Bacillota</taxon>
        <taxon>Bacilli</taxon>
        <taxon>Bacillales</taxon>
        <taxon>Staphylococcaceae</taxon>
        <taxon>Staphylococcus</taxon>
    </lineage>
</organism>
<proteinExistence type="inferred from homology"/>
<protein>
    <recommendedName>
        <fullName>Response regulator ArlR</fullName>
    </recommendedName>
</protein>
<feature type="chain" id="PRO_0000293446" description="Response regulator ArlR">
    <location>
        <begin position="1"/>
        <end position="220"/>
    </location>
</feature>
<feature type="domain" description="Response regulatory" evidence="2">
    <location>
        <begin position="3"/>
        <end position="116"/>
    </location>
</feature>
<feature type="DNA-binding region" description="OmpR/PhoB-type" evidence="3">
    <location>
        <begin position="122"/>
        <end position="220"/>
    </location>
</feature>
<feature type="modified residue" description="4-aspartylphosphate" evidence="2">
    <location>
        <position position="52"/>
    </location>
</feature>
<keyword id="KW-0963">Cytoplasm</keyword>
<keyword id="KW-0238">DNA-binding</keyword>
<keyword id="KW-0597">Phosphoprotein</keyword>
<keyword id="KW-1185">Reference proteome</keyword>
<keyword id="KW-0804">Transcription</keyword>
<keyword id="KW-0805">Transcription regulation</keyword>
<keyword id="KW-0902">Two-component regulatory system</keyword>
<comment type="function">
    <text evidence="1">Member of the two-component regulatory system ArlS/ArlR.</text>
</comment>
<comment type="subcellular location">
    <subcellularLocation>
        <location evidence="1">Cytoplasm</location>
    </subcellularLocation>
</comment>
<comment type="PTM">
    <text evidence="1">Phosphorylated by ArlS.</text>
</comment>
<gene>
    <name type="primary">arlR</name>
    <name type="ordered locus">SSP1323</name>
</gene>
<name>ARLR_STAS1</name>
<dbReference type="EMBL" id="AP008934">
    <property type="protein sequence ID" value="BAE18468.1"/>
    <property type="molecule type" value="Genomic_DNA"/>
</dbReference>
<dbReference type="RefSeq" id="WP_011303104.1">
    <property type="nucleotide sequence ID" value="NZ_MTGA01000038.1"/>
</dbReference>
<dbReference type="SMR" id="Q49XM7"/>
<dbReference type="GeneID" id="3616661"/>
<dbReference type="KEGG" id="ssp:SSP1323"/>
<dbReference type="PATRIC" id="fig|342451.11.peg.1326"/>
<dbReference type="eggNOG" id="COG0745">
    <property type="taxonomic scope" value="Bacteria"/>
</dbReference>
<dbReference type="HOGENOM" id="CLU_000445_30_1_9"/>
<dbReference type="OrthoDB" id="9790442at2"/>
<dbReference type="Proteomes" id="UP000006371">
    <property type="component" value="Chromosome"/>
</dbReference>
<dbReference type="GO" id="GO:0005829">
    <property type="term" value="C:cytosol"/>
    <property type="evidence" value="ECO:0007669"/>
    <property type="project" value="TreeGrafter"/>
</dbReference>
<dbReference type="GO" id="GO:0032993">
    <property type="term" value="C:protein-DNA complex"/>
    <property type="evidence" value="ECO:0007669"/>
    <property type="project" value="TreeGrafter"/>
</dbReference>
<dbReference type="GO" id="GO:0000156">
    <property type="term" value="F:phosphorelay response regulator activity"/>
    <property type="evidence" value="ECO:0007669"/>
    <property type="project" value="TreeGrafter"/>
</dbReference>
<dbReference type="GO" id="GO:0000976">
    <property type="term" value="F:transcription cis-regulatory region binding"/>
    <property type="evidence" value="ECO:0007669"/>
    <property type="project" value="TreeGrafter"/>
</dbReference>
<dbReference type="GO" id="GO:0006355">
    <property type="term" value="P:regulation of DNA-templated transcription"/>
    <property type="evidence" value="ECO:0007669"/>
    <property type="project" value="InterPro"/>
</dbReference>
<dbReference type="CDD" id="cd00383">
    <property type="entry name" value="trans_reg_C"/>
    <property type="match status" value="1"/>
</dbReference>
<dbReference type="FunFam" id="3.40.50.2300:FF:000001">
    <property type="entry name" value="DNA-binding response regulator PhoB"/>
    <property type="match status" value="1"/>
</dbReference>
<dbReference type="FunFam" id="1.10.10.10:FF:000005">
    <property type="entry name" value="Two-component system response regulator"/>
    <property type="match status" value="1"/>
</dbReference>
<dbReference type="Gene3D" id="3.40.50.2300">
    <property type="match status" value="1"/>
</dbReference>
<dbReference type="Gene3D" id="6.10.250.690">
    <property type="match status" value="1"/>
</dbReference>
<dbReference type="Gene3D" id="1.10.10.10">
    <property type="entry name" value="Winged helix-like DNA-binding domain superfamily/Winged helix DNA-binding domain"/>
    <property type="match status" value="1"/>
</dbReference>
<dbReference type="InterPro" id="IPR011006">
    <property type="entry name" value="CheY-like_superfamily"/>
</dbReference>
<dbReference type="InterPro" id="IPR001867">
    <property type="entry name" value="OmpR/PhoB-type_DNA-bd"/>
</dbReference>
<dbReference type="InterPro" id="IPR016032">
    <property type="entry name" value="Sig_transdc_resp-reg_C-effctor"/>
</dbReference>
<dbReference type="InterPro" id="IPR001789">
    <property type="entry name" value="Sig_transdc_resp-reg_receiver"/>
</dbReference>
<dbReference type="InterPro" id="IPR039420">
    <property type="entry name" value="WalR-like"/>
</dbReference>
<dbReference type="InterPro" id="IPR036388">
    <property type="entry name" value="WH-like_DNA-bd_sf"/>
</dbReference>
<dbReference type="PANTHER" id="PTHR48111">
    <property type="entry name" value="REGULATOR OF RPOS"/>
    <property type="match status" value="1"/>
</dbReference>
<dbReference type="PANTHER" id="PTHR48111:SF22">
    <property type="entry name" value="REGULATOR OF RPOS"/>
    <property type="match status" value="1"/>
</dbReference>
<dbReference type="Pfam" id="PF00072">
    <property type="entry name" value="Response_reg"/>
    <property type="match status" value="1"/>
</dbReference>
<dbReference type="Pfam" id="PF00486">
    <property type="entry name" value="Trans_reg_C"/>
    <property type="match status" value="1"/>
</dbReference>
<dbReference type="SMART" id="SM00448">
    <property type="entry name" value="REC"/>
    <property type="match status" value="1"/>
</dbReference>
<dbReference type="SMART" id="SM00862">
    <property type="entry name" value="Trans_reg_C"/>
    <property type="match status" value="1"/>
</dbReference>
<dbReference type="SUPFAM" id="SSF46894">
    <property type="entry name" value="C-terminal effector domain of the bipartite response regulators"/>
    <property type="match status" value="1"/>
</dbReference>
<dbReference type="SUPFAM" id="SSF52172">
    <property type="entry name" value="CheY-like"/>
    <property type="match status" value="1"/>
</dbReference>
<dbReference type="PROSITE" id="PS51755">
    <property type="entry name" value="OMPR_PHOB"/>
    <property type="match status" value="1"/>
</dbReference>
<dbReference type="PROSITE" id="PS50110">
    <property type="entry name" value="RESPONSE_REGULATORY"/>
    <property type="match status" value="1"/>
</dbReference>